<accession>B4SGZ7</accession>
<gene>
    <name evidence="1" type="primary">bioB</name>
    <name type="ordered locus">Ppha_2839</name>
</gene>
<comment type="function">
    <text evidence="1">Catalyzes the conversion of dethiobiotin (DTB) to biotin by the insertion of a sulfur atom into dethiobiotin via a radical-based mechanism.</text>
</comment>
<comment type="catalytic activity">
    <reaction evidence="1">
        <text>(4R,5S)-dethiobiotin + (sulfur carrier)-SH + 2 reduced [2Fe-2S]-[ferredoxin] + 2 S-adenosyl-L-methionine = (sulfur carrier)-H + biotin + 2 5'-deoxyadenosine + 2 L-methionine + 2 oxidized [2Fe-2S]-[ferredoxin]</text>
        <dbReference type="Rhea" id="RHEA:22060"/>
        <dbReference type="Rhea" id="RHEA-COMP:10000"/>
        <dbReference type="Rhea" id="RHEA-COMP:10001"/>
        <dbReference type="Rhea" id="RHEA-COMP:14737"/>
        <dbReference type="Rhea" id="RHEA-COMP:14739"/>
        <dbReference type="ChEBI" id="CHEBI:17319"/>
        <dbReference type="ChEBI" id="CHEBI:29917"/>
        <dbReference type="ChEBI" id="CHEBI:33737"/>
        <dbReference type="ChEBI" id="CHEBI:33738"/>
        <dbReference type="ChEBI" id="CHEBI:57586"/>
        <dbReference type="ChEBI" id="CHEBI:57844"/>
        <dbReference type="ChEBI" id="CHEBI:59789"/>
        <dbReference type="ChEBI" id="CHEBI:64428"/>
        <dbReference type="ChEBI" id="CHEBI:149473"/>
        <dbReference type="EC" id="2.8.1.6"/>
    </reaction>
</comment>
<comment type="cofactor">
    <cofactor evidence="1">
        <name>[4Fe-4S] cluster</name>
        <dbReference type="ChEBI" id="CHEBI:49883"/>
    </cofactor>
    <text evidence="1">Binds 1 [4Fe-4S] cluster. The cluster is coordinated with 3 cysteines and an exchangeable S-adenosyl-L-methionine.</text>
</comment>
<comment type="cofactor">
    <cofactor evidence="1">
        <name>[2Fe-2S] cluster</name>
        <dbReference type="ChEBI" id="CHEBI:190135"/>
    </cofactor>
    <text evidence="1">Binds 1 [2Fe-2S] cluster. The cluster is coordinated with 3 cysteines and 1 arginine.</text>
</comment>
<comment type="pathway">
    <text evidence="1">Cofactor biosynthesis; biotin biosynthesis; biotin from 7,8-diaminononanoate: step 2/2.</text>
</comment>
<comment type="subunit">
    <text evidence="1">Homodimer.</text>
</comment>
<comment type="similarity">
    <text evidence="1">Belongs to the radical SAM superfamily. Biotin synthase family.</text>
</comment>
<sequence length="337" mass="36779">MDYRTLHPQIAAAYRVLETGSPISQAEALLLAELPGELVLDLASLANKVKNRYGTGSAGSELLHACSIMNAKSGVCGENCRFCAQSRHNRADIEVYDLVDAESVLIEARNCFAEGVSHFGIVTSGYGYKRINPEFQRVLDMIDRLHEELPELSVCASLGMLGEEPAEALAAHGIAHYNINIQVVPDRYHDLIADTHSVEERIETIKLLRKNNISVCCGGIMGVGETMQERIAMIFALQELDVSVIPLNVLVPIEGTPLAGKEPLSVAEIVKTFAICRLAHPHKIIKFAAGRETIMKDFQGLLMLSGANGFLTGGYLTTRGRDIADDRRFASQIASFN</sequence>
<protein>
    <recommendedName>
        <fullName evidence="1">Biotin synthase</fullName>
        <ecNumber evidence="1">2.8.1.6</ecNumber>
    </recommendedName>
</protein>
<evidence type="ECO:0000255" key="1">
    <source>
        <dbReference type="HAMAP-Rule" id="MF_01694"/>
    </source>
</evidence>
<evidence type="ECO:0000255" key="2">
    <source>
        <dbReference type="PROSITE-ProRule" id="PRU01266"/>
    </source>
</evidence>
<reference key="1">
    <citation type="submission" date="2008-06" db="EMBL/GenBank/DDBJ databases">
        <title>Complete sequence of Pelodictyon phaeoclathratiforme BU-1.</title>
        <authorList>
            <consortium name="US DOE Joint Genome Institute"/>
            <person name="Lucas S."/>
            <person name="Copeland A."/>
            <person name="Lapidus A."/>
            <person name="Glavina del Rio T."/>
            <person name="Dalin E."/>
            <person name="Tice H."/>
            <person name="Bruce D."/>
            <person name="Goodwin L."/>
            <person name="Pitluck S."/>
            <person name="Schmutz J."/>
            <person name="Larimer F."/>
            <person name="Land M."/>
            <person name="Hauser L."/>
            <person name="Kyrpides N."/>
            <person name="Mikhailova N."/>
            <person name="Liu Z."/>
            <person name="Li T."/>
            <person name="Zhao F."/>
            <person name="Overmann J."/>
            <person name="Bryant D.A."/>
            <person name="Richardson P."/>
        </authorList>
    </citation>
    <scope>NUCLEOTIDE SEQUENCE [LARGE SCALE GENOMIC DNA]</scope>
    <source>
        <strain>DSM 5477 / BU-1</strain>
    </source>
</reference>
<organism>
    <name type="scientific">Pelodictyon phaeoclathratiforme (strain DSM 5477 / BU-1)</name>
    <dbReference type="NCBI Taxonomy" id="324925"/>
    <lineage>
        <taxon>Bacteria</taxon>
        <taxon>Pseudomonadati</taxon>
        <taxon>Chlorobiota</taxon>
        <taxon>Chlorobiia</taxon>
        <taxon>Chlorobiales</taxon>
        <taxon>Chlorobiaceae</taxon>
        <taxon>Chlorobium/Pelodictyon group</taxon>
        <taxon>Pelodictyon</taxon>
    </lineage>
</organism>
<proteinExistence type="inferred from homology"/>
<keyword id="KW-0001">2Fe-2S</keyword>
<keyword id="KW-0004">4Fe-4S</keyword>
<keyword id="KW-0093">Biotin biosynthesis</keyword>
<keyword id="KW-0408">Iron</keyword>
<keyword id="KW-0411">Iron-sulfur</keyword>
<keyword id="KW-0479">Metal-binding</keyword>
<keyword id="KW-1185">Reference proteome</keyword>
<keyword id="KW-0949">S-adenosyl-L-methionine</keyword>
<keyword id="KW-0808">Transferase</keyword>
<feature type="chain" id="PRO_0000381521" description="Biotin synthase">
    <location>
        <begin position="1"/>
        <end position="337"/>
    </location>
</feature>
<feature type="domain" description="Radical SAM core" evidence="2">
    <location>
        <begin position="58"/>
        <end position="288"/>
    </location>
</feature>
<feature type="binding site" evidence="1">
    <location>
        <position position="76"/>
    </location>
    <ligand>
        <name>[4Fe-4S] cluster</name>
        <dbReference type="ChEBI" id="CHEBI:49883"/>
        <note>4Fe-4S-S-AdoMet</note>
    </ligand>
</feature>
<feature type="binding site" evidence="1">
    <location>
        <position position="80"/>
    </location>
    <ligand>
        <name>[4Fe-4S] cluster</name>
        <dbReference type="ChEBI" id="CHEBI:49883"/>
        <note>4Fe-4S-S-AdoMet</note>
    </ligand>
</feature>
<feature type="binding site" evidence="1">
    <location>
        <position position="83"/>
    </location>
    <ligand>
        <name>[4Fe-4S] cluster</name>
        <dbReference type="ChEBI" id="CHEBI:49883"/>
        <note>4Fe-4S-S-AdoMet</note>
    </ligand>
</feature>
<feature type="binding site" evidence="1">
    <location>
        <position position="155"/>
    </location>
    <ligand>
        <name>[2Fe-2S] cluster</name>
        <dbReference type="ChEBI" id="CHEBI:190135"/>
    </ligand>
</feature>
<feature type="binding site" evidence="1">
    <location>
        <position position="216"/>
    </location>
    <ligand>
        <name>[2Fe-2S] cluster</name>
        <dbReference type="ChEBI" id="CHEBI:190135"/>
    </ligand>
</feature>
<feature type="binding site" evidence="1">
    <location>
        <position position="286"/>
    </location>
    <ligand>
        <name>[2Fe-2S] cluster</name>
        <dbReference type="ChEBI" id="CHEBI:190135"/>
    </ligand>
</feature>
<dbReference type="EC" id="2.8.1.6" evidence="1"/>
<dbReference type="EMBL" id="CP001110">
    <property type="protein sequence ID" value="ACF44985.1"/>
    <property type="molecule type" value="Genomic_DNA"/>
</dbReference>
<dbReference type="RefSeq" id="WP_012509453.1">
    <property type="nucleotide sequence ID" value="NC_011060.1"/>
</dbReference>
<dbReference type="SMR" id="B4SGZ7"/>
<dbReference type="STRING" id="324925.Ppha_2839"/>
<dbReference type="KEGG" id="pph:Ppha_2839"/>
<dbReference type="eggNOG" id="COG0502">
    <property type="taxonomic scope" value="Bacteria"/>
</dbReference>
<dbReference type="HOGENOM" id="CLU_033172_2_1_10"/>
<dbReference type="OrthoDB" id="9786826at2"/>
<dbReference type="UniPathway" id="UPA00078">
    <property type="reaction ID" value="UER00162"/>
</dbReference>
<dbReference type="Proteomes" id="UP000002724">
    <property type="component" value="Chromosome"/>
</dbReference>
<dbReference type="GO" id="GO:0051537">
    <property type="term" value="F:2 iron, 2 sulfur cluster binding"/>
    <property type="evidence" value="ECO:0007669"/>
    <property type="project" value="UniProtKB-KW"/>
</dbReference>
<dbReference type="GO" id="GO:0051539">
    <property type="term" value="F:4 iron, 4 sulfur cluster binding"/>
    <property type="evidence" value="ECO:0007669"/>
    <property type="project" value="UniProtKB-KW"/>
</dbReference>
<dbReference type="GO" id="GO:0004076">
    <property type="term" value="F:biotin synthase activity"/>
    <property type="evidence" value="ECO:0007669"/>
    <property type="project" value="UniProtKB-UniRule"/>
</dbReference>
<dbReference type="GO" id="GO:0005506">
    <property type="term" value="F:iron ion binding"/>
    <property type="evidence" value="ECO:0007669"/>
    <property type="project" value="UniProtKB-UniRule"/>
</dbReference>
<dbReference type="GO" id="GO:0009102">
    <property type="term" value="P:biotin biosynthetic process"/>
    <property type="evidence" value="ECO:0007669"/>
    <property type="project" value="UniProtKB-UniRule"/>
</dbReference>
<dbReference type="CDD" id="cd01335">
    <property type="entry name" value="Radical_SAM"/>
    <property type="match status" value="1"/>
</dbReference>
<dbReference type="Gene3D" id="3.20.20.70">
    <property type="entry name" value="Aldolase class I"/>
    <property type="match status" value="1"/>
</dbReference>
<dbReference type="HAMAP" id="MF_01694">
    <property type="entry name" value="BioB"/>
    <property type="match status" value="1"/>
</dbReference>
<dbReference type="InterPro" id="IPR013785">
    <property type="entry name" value="Aldolase_TIM"/>
</dbReference>
<dbReference type="InterPro" id="IPR010722">
    <property type="entry name" value="BATS_dom"/>
</dbReference>
<dbReference type="InterPro" id="IPR002684">
    <property type="entry name" value="Biotin_synth/BioAB"/>
</dbReference>
<dbReference type="InterPro" id="IPR024177">
    <property type="entry name" value="Biotin_synthase"/>
</dbReference>
<dbReference type="InterPro" id="IPR006638">
    <property type="entry name" value="Elp3/MiaA/NifB-like_rSAM"/>
</dbReference>
<dbReference type="InterPro" id="IPR007197">
    <property type="entry name" value="rSAM"/>
</dbReference>
<dbReference type="NCBIfam" id="TIGR00433">
    <property type="entry name" value="bioB"/>
    <property type="match status" value="1"/>
</dbReference>
<dbReference type="PANTHER" id="PTHR22976">
    <property type="entry name" value="BIOTIN SYNTHASE"/>
    <property type="match status" value="1"/>
</dbReference>
<dbReference type="PANTHER" id="PTHR22976:SF2">
    <property type="entry name" value="BIOTIN SYNTHASE, MITOCHONDRIAL"/>
    <property type="match status" value="1"/>
</dbReference>
<dbReference type="Pfam" id="PF06968">
    <property type="entry name" value="BATS"/>
    <property type="match status" value="1"/>
</dbReference>
<dbReference type="Pfam" id="PF04055">
    <property type="entry name" value="Radical_SAM"/>
    <property type="match status" value="1"/>
</dbReference>
<dbReference type="PIRSF" id="PIRSF001619">
    <property type="entry name" value="Biotin_synth"/>
    <property type="match status" value="1"/>
</dbReference>
<dbReference type="SFLD" id="SFLDG01278">
    <property type="entry name" value="biotin_synthase_like"/>
    <property type="match status" value="1"/>
</dbReference>
<dbReference type="SFLD" id="SFLDS00029">
    <property type="entry name" value="Radical_SAM"/>
    <property type="match status" value="1"/>
</dbReference>
<dbReference type="SMART" id="SM00876">
    <property type="entry name" value="BATS"/>
    <property type="match status" value="1"/>
</dbReference>
<dbReference type="SMART" id="SM00729">
    <property type="entry name" value="Elp3"/>
    <property type="match status" value="1"/>
</dbReference>
<dbReference type="SUPFAM" id="SSF102114">
    <property type="entry name" value="Radical SAM enzymes"/>
    <property type="match status" value="1"/>
</dbReference>
<dbReference type="PROSITE" id="PS51918">
    <property type="entry name" value="RADICAL_SAM"/>
    <property type="match status" value="1"/>
</dbReference>
<name>BIOB_PELPB</name>